<accession>P60173</accession>
<accession>Q89455</accession>
<evidence type="ECO:0000250" key="1"/>
<evidence type="ECO:0000250" key="2">
    <source>
        <dbReference type="UniProtKB" id="P60170"/>
    </source>
</evidence>
<evidence type="ECO:0000255" key="3"/>
<evidence type="ECO:0000256" key="4">
    <source>
        <dbReference type="SAM" id="MobiDB-lite"/>
    </source>
</evidence>
<evidence type="ECO:0000269" key="5">
    <source>
    </source>
</evidence>
<evidence type="ECO:0000305" key="6"/>
<reference key="1">
    <citation type="journal article" date="1996" name="Proc. Natl. Acad. Sci. U.S.A.">
        <title>The virion glycoproteins of Ebola viruses are encoded in two reading frames and are expressed through transcriptional editing.</title>
        <authorList>
            <person name="Sanchez A."/>
            <person name="Trappier S.G."/>
            <person name="Mahy B.W.J."/>
            <person name="Peters C.J."/>
            <person name="Nichol S.T."/>
        </authorList>
    </citation>
    <scope>NUCLEOTIDE SEQUENCE [GENOMIC RNA]</scope>
    <scope>RNA EDITING</scope>
</reference>
<keyword id="KW-0165">Cleavage on pair of basic residues</keyword>
<keyword id="KW-1015">Disulfide bond</keyword>
<keyword id="KW-0325">Glycoprotein</keyword>
<keyword id="KW-0407">Ion channel</keyword>
<keyword id="KW-0406">Ion transport</keyword>
<keyword id="KW-0691">RNA editing</keyword>
<keyword id="KW-0964">Secreted</keyword>
<keyword id="KW-0732">Signal</keyword>
<keyword id="KW-0813">Transport</keyword>
<keyword id="KW-1182">Viral ion channel</keyword>
<gene>
    <name type="primary">GP</name>
</gene>
<dbReference type="EMBL" id="U23069">
    <property type="protein sequence ID" value="AAC54883.1"/>
    <property type="molecule type" value="Genomic_RNA"/>
</dbReference>
<dbReference type="SMR" id="P60173"/>
<dbReference type="GlyCosmos" id="P60173">
    <property type="glycosylation" value="6 sites, No reported glycans"/>
</dbReference>
<dbReference type="GO" id="GO:0005576">
    <property type="term" value="C:extracellular region"/>
    <property type="evidence" value="ECO:0007669"/>
    <property type="project" value="UniProtKB-SubCell"/>
</dbReference>
<dbReference type="GO" id="GO:0033644">
    <property type="term" value="C:host cell membrane"/>
    <property type="evidence" value="ECO:0007669"/>
    <property type="project" value="UniProtKB-KW"/>
</dbReference>
<dbReference type="GO" id="GO:0015267">
    <property type="term" value="F:channel activity"/>
    <property type="evidence" value="ECO:0007669"/>
    <property type="project" value="UniProtKB-KW"/>
</dbReference>
<dbReference type="GO" id="GO:0034220">
    <property type="term" value="P:monoatomic ion transmembrane transport"/>
    <property type="evidence" value="ECO:0007669"/>
    <property type="project" value="UniProtKB-KW"/>
</dbReference>
<dbReference type="InterPro" id="IPR014625">
    <property type="entry name" value="GPC_FiloV"/>
</dbReference>
<dbReference type="InterPro" id="IPR002561">
    <property type="entry name" value="GPC_filovir-type_extra_dom"/>
</dbReference>
<dbReference type="Pfam" id="PF01611">
    <property type="entry name" value="Filo_glycop"/>
    <property type="match status" value="1"/>
</dbReference>
<dbReference type="PIRSF" id="PIRSF036874">
    <property type="entry name" value="GPC_FiloV"/>
    <property type="match status" value="1"/>
</dbReference>
<protein>
    <recommendedName>
        <fullName>Pre-small/secreted glycoprotein</fullName>
        <shortName>pre-sGP</shortName>
    </recommendedName>
    <component>
        <recommendedName>
            <fullName>Small/secreted glycoprotein</fullName>
            <shortName>sGP</shortName>
        </recommendedName>
    </component>
    <component>
        <recommendedName>
            <fullName>Delta-peptide</fullName>
        </recommendedName>
    </component>
</protein>
<organism>
    <name type="scientific">Sudan ebolavirus (strain Maleo-79)</name>
    <name type="common">SEBOV</name>
    <name type="synonym">Sudan Ebola virus</name>
    <dbReference type="NCBI Taxonomy" id="128949"/>
    <lineage>
        <taxon>Viruses</taxon>
        <taxon>Riboviria</taxon>
        <taxon>Orthornavirae</taxon>
        <taxon>Negarnaviricota</taxon>
        <taxon>Haploviricotina</taxon>
        <taxon>Monjiviricetes</taxon>
        <taxon>Mononegavirales</taxon>
        <taxon>Filoviridae</taxon>
        <taxon>Orthoebolavirus</taxon>
        <taxon>Orthoebolavirus sudanense</taxon>
        <taxon>Sudan ebolavirus</taxon>
    </lineage>
</organism>
<feature type="signal peptide" evidence="3">
    <location>
        <begin position="1"/>
        <end position="32"/>
    </location>
</feature>
<feature type="chain" id="PRO_0000037506" description="Pre-small/secreted glycoprotein" evidence="1">
    <location>
        <begin position="33"/>
        <end position="372"/>
    </location>
</feature>
<feature type="chain" id="PRO_0000037507" description="Small/secreted glycoprotein" evidence="1">
    <location>
        <begin position="33"/>
        <end position="324"/>
    </location>
</feature>
<feature type="chain" id="PRO_0000037508" description="Delta-peptide" evidence="1">
    <location>
        <begin position="325"/>
        <end position="372"/>
    </location>
</feature>
<feature type="region of interest" description="Disordered" evidence="4">
    <location>
        <begin position="320"/>
        <end position="340"/>
    </location>
</feature>
<feature type="site" description="Cleavage; by host furin" evidence="1">
    <location>
        <begin position="324"/>
        <end position="325"/>
    </location>
</feature>
<feature type="glycosylation site" description="N-linked (GlcNAc...) asparagine; by host" evidence="3">
    <location>
        <position position="40"/>
    </location>
</feature>
<feature type="glycosylation site" description="N-linked (GlcNAc...) asparagine; by host" evidence="3">
    <location>
        <position position="204"/>
    </location>
</feature>
<feature type="glycosylation site" description="N-linked (GlcNAc...) asparagine; by host" evidence="3">
    <location>
        <position position="208"/>
    </location>
</feature>
<feature type="glycosylation site" description="N-linked (GlcNAc...) asparagine; by host" evidence="3">
    <location>
        <position position="238"/>
    </location>
</feature>
<feature type="glycosylation site" description="N-linked (GlcNAc...) asparagine; by host" evidence="3">
    <location>
        <position position="257"/>
    </location>
</feature>
<feature type="glycosylation site" description="N-linked (GlcNAc...) asparagine; by host" evidence="3">
    <location>
        <position position="268"/>
    </location>
</feature>
<feature type="disulfide bond" description="Interchain" evidence="1">
    <location>
        <position position="53"/>
    </location>
</feature>
<feature type="disulfide bond" evidence="1">
    <location>
        <begin position="108"/>
        <end position="135"/>
    </location>
</feature>
<feature type="disulfide bond" evidence="1">
    <location>
        <begin position="121"/>
        <end position="147"/>
    </location>
</feature>
<feature type="disulfide bond" description="Interchain" evidence="1">
    <location>
        <position position="306"/>
    </location>
</feature>
<name>VSGP_EBOSM</name>
<proteinExistence type="inferred from homology"/>
<organismHost>
    <name type="scientific">Epomops franqueti</name>
    <name type="common">Franquet's epauletted fruit bat</name>
    <name type="synonym">Epomophorus franqueti</name>
    <dbReference type="NCBI Taxonomy" id="77231"/>
</organismHost>
<organismHost>
    <name type="scientific">Homo sapiens</name>
    <name type="common">Human</name>
    <dbReference type="NCBI Taxonomy" id="9606"/>
</organismHost>
<organismHost>
    <name type="scientific">Myonycteris torquata</name>
    <name type="common">Little collared fruit bat</name>
    <dbReference type="NCBI Taxonomy" id="77243"/>
</organismHost>
<sequence length="372" mass="42547">MEGLSLLQLPRDKFRKSSFFVWVIILFQKAFSMPLGVVTNSTLEVTEIDQLVCKDHLASTDQLKSVGLNLEGSGVSTDIPSATKRWGFRSGVPPQVVSYEAGEWAENCYNLEIKKPDGSECLPPPPDGVRGFPRCRYVHKAQGTGPCPGDYAFHKDGAFFLYDRLASTVIYRGVNFAEGVIAFLILAKPKETFLQSPPIREAANYTENTSSYYATSYLEYEIENFGAQHSTTLFKINNNTFVLLDRPHTPQFLFQLNDTIQLHQQLSNTTGKLIWTLDANINADIGEWAFWENKKISPNNYVEKSCLSKLYRSTRQKTMMRHRRELQREESPTGPPGSIRTWFQRIPLGWFHCTYQKGKQHCRLRIRQKVEE</sequence>
<comment type="function">
    <molecule>Small/secreted glycoprotein</molecule>
    <text evidence="2">Seems to possess an anti-inflammatory activity as it can reverse the barrier-decreasing effects of TNF alpha. Might therefore contribute to the lack of inflammatory reaction seen during infection in spite the of extensive necrosis and massive virus production. Does not seem to be involved in activation of primary macrophages. Does not seem to interact specifically with neutrophils.</text>
</comment>
<comment type="function">
    <molecule>Delta-peptide</molecule>
    <text evidence="2">Viroporin that permeabilizes mammalian cell plasma membranes. It acts by altering permeation of ionic compounds and small molecules. This activity may lead to viral enterotoxic activity.</text>
</comment>
<comment type="subunit">
    <molecule>Small/secreted glycoprotein</molecule>
    <text evidence="2">Homodimer; disulfide-linked (By similarity). The homodimers are linked by two disulfide bonds in a parallel orientation (By similarity).</text>
</comment>
<comment type="subunit">
    <molecule>Delta-peptide</molecule>
    <text>Monomer.</text>
</comment>
<comment type="subcellular location">
    <molecule>Small/secreted glycoprotein</molecule>
    <subcellularLocation>
        <location evidence="2">Secreted</location>
    </subcellularLocation>
</comment>
<comment type="subcellular location">
    <molecule>Delta-peptide</molecule>
    <subcellularLocation>
        <location evidence="2">Secreted</location>
    </subcellularLocation>
</comment>
<comment type="PTM">
    <molecule>Pre-small/secreted glycoprotein</molecule>
    <text evidence="2">This precursor is processed into mature sGP and delta-peptide by host furin or furin-like proteases. The cleavage site corresponds to the furin optimal cleavage sequence [KR]-X-[KR]-R.</text>
</comment>
<comment type="PTM">
    <molecule>Small/secreted glycoprotein</molecule>
    <text evidence="2">N-glycosylated.</text>
</comment>
<comment type="PTM">
    <molecule>Delta-peptide</molecule>
    <text evidence="2">O-glycosylated.</text>
</comment>
<comment type="RNA editing">
    <location>
        <position position="295" evidence="5"/>
    </location>
    <text>Partially edited. RNA editing at this position consists of an insertion of one adenine nucleotide. The sequence displayed here is the small secreted glycoprotein, derived from the unedited RNA. The edited RNA gives rise to the full-length transmembrane glycoprotein (AC Q66798).</text>
</comment>
<comment type="similarity">
    <text evidence="6">Belongs to the filoviruses glycoprotein family.</text>
</comment>